<evidence type="ECO:0000250" key="1"/>
<evidence type="ECO:0000255" key="2"/>
<evidence type="ECO:0000305" key="3"/>
<comment type="subcellular location">
    <subcellularLocation>
        <location evidence="1">Mitochondrion membrane</location>
        <topology evidence="1">Single-pass membrane protein</topology>
    </subcellularLocation>
</comment>
<comment type="similarity">
    <text evidence="3">Belongs to the AIM36 family.</text>
</comment>
<gene>
    <name type="primary">AIM36</name>
    <name type="synonym">FMP39</name>
    <name type="ordered locus">ZYRO0A07700g</name>
</gene>
<name>AIM36_ZYGRC</name>
<organism>
    <name type="scientific">Zygosaccharomyces rouxii (strain ATCC 2623 / CBS 732 / NBRC 1130 / NCYC 568 / NRRL Y-229)</name>
    <dbReference type="NCBI Taxonomy" id="559307"/>
    <lineage>
        <taxon>Eukaryota</taxon>
        <taxon>Fungi</taxon>
        <taxon>Dikarya</taxon>
        <taxon>Ascomycota</taxon>
        <taxon>Saccharomycotina</taxon>
        <taxon>Saccharomycetes</taxon>
        <taxon>Saccharomycetales</taxon>
        <taxon>Saccharomycetaceae</taxon>
        <taxon>Zygosaccharomyces</taxon>
    </lineage>
</organism>
<protein>
    <recommendedName>
        <fullName>Altered inheritance of mitochondria protein 36, mitochondrial</fullName>
    </recommendedName>
    <alternativeName>
        <fullName>Found in mitochondria protein 39</fullName>
    </alternativeName>
</protein>
<reference key="1">
    <citation type="journal article" date="2009" name="Genome Res.">
        <title>Comparative genomics of protoploid Saccharomycetaceae.</title>
        <authorList>
            <consortium name="The Genolevures Consortium"/>
            <person name="Souciet J.-L."/>
            <person name="Dujon B."/>
            <person name="Gaillardin C."/>
            <person name="Johnston M."/>
            <person name="Baret P.V."/>
            <person name="Cliften P."/>
            <person name="Sherman D.J."/>
            <person name="Weissenbach J."/>
            <person name="Westhof E."/>
            <person name="Wincker P."/>
            <person name="Jubin C."/>
            <person name="Poulain J."/>
            <person name="Barbe V."/>
            <person name="Segurens B."/>
            <person name="Artiguenave F."/>
            <person name="Anthouard V."/>
            <person name="Vacherie B."/>
            <person name="Val M.-E."/>
            <person name="Fulton R.S."/>
            <person name="Minx P."/>
            <person name="Wilson R."/>
            <person name="Durrens P."/>
            <person name="Jean G."/>
            <person name="Marck C."/>
            <person name="Martin T."/>
            <person name="Nikolski M."/>
            <person name="Rolland T."/>
            <person name="Seret M.-L."/>
            <person name="Casaregola S."/>
            <person name="Despons L."/>
            <person name="Fairhead C."/>
            <person name="Fischer G."/>
            <person name="Lafontaine I."/>
            <person name="Leh V."/>
            <person name="Lemaire M."/>
            <person name="de Montigny J."/>
            <person name="Neuveglise C."/>
            <person name="Thierry A."/>
            <person name="Blanc-Lenfle I."/>
            <person name="Bleykasten C."/>
            <person name="Diffels J."/>
            <person name="Fritsch E."/>
            <person name="Frangeul L."/>
            <person name="Goeffon A."/>
            <person name="Jauniaux N."/>
            <person name="Kachouri-Lafond R."/>
            <person name="Payen C."/>
            <person name="Potier S."/>
            <person name="Pribylova L."/>
            <person name="Ozanne C."/>
            <person name="Richard G.-F."/>
            <person name="Sacerdot C."/>
            <person name="Straub M.-L."/>
            <person name="Talla E."/>
        </authorList>
    </citation>
    <scope>NUCLEOTIDE SEQUENCE [LARGE SCALE GENOMIC DNA]</scope>
    <source>
        <strain>ATCC 2623 / CBS 732 / BCRC 21506 / NBRC 1130 / NCYC 568 / NRRL Y-229</strain>
    </source>
</reference>
<accession>C5DQ08</accession>
<feature type="transit peptide" description="Mitochondrion" evidence="2">
    <location>
        <begin position="1"/>
        <end position="35"/>
    </location>
</feature>
<feature type="chain" id="PRO_0000399736" description="Altered inheritance of mitochondria protein 36, mitochondrial">
    <location>
        <begin position="36"/>
        <end position="238"/>
    </location>
</feature>
<feature type="transmembrane region" description="Helical" evidence="2">
    <location>
        <begin position="49"/>
        <end position="65"/>
    </location>
</feature>
<dbReference type="EMBL" id="CU928173">
    <property type="protein sequence ID" value="CAR25769.1"/>
    <property type="molecule type" value="Genomic_DNA"/>
</dbReference>
<dbReference type="RefSeq" id="XP_002494702.1">
    <property type="nucleotide sequence ID" value="XM_002494657.1"/>
</dbReference>
<dbReference type="SMR" id="C5DQ08"/>
<dbReference type="FunCoup" id="C5DQ08">
    <property type="interactions" value="31"/>
</dbReference>
<dbReference type="GeneID" id="8201514"/>
<dbReference type="KEGG" id="zro:ZYRO0A07700g"/>
<dbReference type="HOGENOM" id="CLU_090420_0_0_1"/>
<dbReference type="InParanoid" id="C5DQ08"/>
<dbReference type="Proteomes" id="UP000008536">
    <property type="component" value="Chromosome A"/>
</dbReference>
<dbReference type="GO" id="GO:0031966">
    <property type="term" value="C:mitochondrial membrane"/>
    <property type="evidence" value="ECO:0007669"/>
    <property type="project" value="UniProtKB-SubCell"/>
</dbReference>
<proteinExistence type="inferred from homology"/>
<sequence>MLPFRRILLRRGPLTGRAALFSPAFRTLGGVSREYASKPAKPAARNNTGPGFAMIFALAIIGTVIFNETAKNLDKNKPRNTFTEEEYEHVMQGLKRRVAMFPDGQLDVQFSLQKDSTQLKKLLGDSKLYIDPGQVVENYRSDREDPYEPLLNEVYSKYGPEYLKYLPQGLLVSLLGRYMKAHCRQGDHVVILDFPHSIKDAIKFENEVSSASKLLVPKESLDSDVCKYYQTVQKSQQL</sequence>
<keyword id="KW-0472">Membrane</keyword>
<keyword id="KW-0496">Mitochondrion</keyword>
<keyword id="KW-1185">Reference proteome</keyword>
<keyword id="KW-0809">Transit peptide</keyword>
<keyword id="KW-0812">Transmembrane</keyword>
<keyword id="KW-1133">Transmembrane helix</keyword>